<name>GCS22_FRACC</name>
<accession>Q2J8X3</accession>
<reference key="1">
    <citation type="journal article" date="2007" name="Genome Res.">
        <title>Genome characteristics of facultatively symbiotic Frankia sp. strains reflect host range and host plant biogeography.</title>
        <authorList>
            <person name="Normand P."/>
            <person name="Lapierre P."/>
            <person name="Tisa L.S."/>
            <person name="Gogarten J.P."/>
            <person name="Alloisio N."/>
            <person name="Bagnarol E."/>
            <person name="Bassi C.A."/>
            <person name="Berry A.M."/>
            <person name="Bickhart D.M."/>
            <person name="Choisne N."/>
            <person name="Couloux A."/>
            <person name="Cournoyer B."/>
            <person name="Cruveiller S."/>
            <person name="Daubin V."/>
            <person name="Demange N."/>
            <person name="Francino M.P."/>
            <person name="Goltsman E."/>
            <person name="Huang Y."/>
            <person name="Kopp O.R."/>
            <person name="Labarre L."/>
            <person name="Lapidus A."/>
            <person name="Lavire C."/>
            <person name="Marechal J."/>
            <person name="Martinez M."/>
            <person name="Mastronunzio J.E."/>
            <person name="Mullin B.C."/>
            <person name="Niemann J."/>
            <person name="Pujic P."/>
            <person name="Rawnsley T."/>
            <person name="Rouy Z."/>
            <person name="Schenowitz C."/>
            <person name="Sellstedt A."/>
            <person name="Tavares F."/>
            <person name="Tomkins J.P."/>
            <person name="Vallenet D."/>
            <person name="Valverde C."/>
            <person name="Wall L.G."/>
            <person name="Wang Y."/>
            <person name="Medigue C."/>
            <person name="Benson D.R."/>
        </authorList>
    </citation>
    <scope>NUCLEOTIDE SEQUENCE [LARGE SCALE GENOMIC DNA]</scope>
    <source>
        <strain>DSM 45818 / CECT 9043 / HFP020203 / CcI3</strain>
    </source>
</reference>
<organism>
    <name type="scientific">Frankia casuarinae (strain DSM 45818 / CECT 9043 / HFP020203 / CcI3)</name>
    <dbReference type="NCBI Taxonomy" id="106370"/>
    <lineage>
        <taxon>Bacteria</taxon>
        <taxon>Bacillati</taxon>
        <taxon>Actinomycetota</taxon>
        <taxon>Actinomycetes</taxon>
        <taxon>Frankiales</taxon>
        <taxon>Frankiaceae</taxon>
        <taxon>Frankia</taxon>
    </lineage>
</organism>
<evidence type="ECO:0000250" key="1"/>
<evidence type="ECO:0000305" key="2"/>
<protein>
    <recommendedName>
        <fullName>Putative glutamate--cysteine ligase 2-2</fullName>
        <ecNumber>6.3.2.2</ecNumber>
    </recommendedName>
    <alternativeName>
        <fullName>Gamma-glutamylcysteine synthetase 2-2</fullName>
        <shortName>GCS 2-2</shortName>
        <shortName>Gamma-GCS 2-2</shortName>
    </alternativeName>
</protein>
<gene>
    <name type="ordered locus">Francci3_2911</name>
</gene>
<sequence length="861" mass="93068">MSDARIVAVGVEEEFHILDLTTRQLVPRAEEVLRRLDGDSFSPELLKSVVETNSQPTADLLELRTNLLDLRRRLAEVTGELGLGPAAAGTVPIVDMDLLDVSRDDRYEQMTEDYQIVAREQLICGAQVHVDVADRDLAMAVVAWTAPWLPMLLALSASSPFWMGADSGYASMRTLVWQRWPTAGVAGSFRTAAEYDQLVADLIKSGVISDPGMVYFDVRPSAHLPTVELRICDACPDVDNVILIAGLFRALVCQAIEEIEAGGQAPPPRAELLRAATWRAARSGLEGDLVDILGAGPIPAQAMLRRLLTEVRPQLERFDDWELIDNLAEQAVGRGSSAHRQRRAFARRGLLTDVADLVLAETRDVPPAGAAAALGSAPAVSASDQIAPRLLERYQPTGYDEIVDARGAVRPQYRAVMRTLERLGPGILDERVGTREAEQNDRGIVFRASGDSASRPFPFDLVPRIIAADDWTTLTTGLSQRVRALEAFLHDIYGERAAVADGIVPAWVVNDAPSLRHGGRAVGPDAIRVTVAGIDLVRGGDGGWLVLEDNLRVPSGIAYAMEGRRLAESVLPELGPPAGILRLDGIPALLHEALVAAAPAAATGDPAVAVLTGGKTDAAYFEHSLLAEKMGVALVEPADLLVDDNDVVYRIDGSRRCRVDVLYRRMDEDDLFGALGAAGTPLGLPLLRAIRARRVGIANALGNGVGDDKVVYAYVPRMVTYYLGEQPVLDDVPTYVCGDPEQCEHVLDNLDQLVVKPVDGYGGSGVVIGPHAEPYRLTEVRERILANPRQWIGQELVSLSTHPTWHDSHLEPCAVDLRVFVYAGREPRVVPAALSRVAPPGSLIVNSSQGGGSKDTWIPRR</sequence>
<proteinExistence type="inferred from homology"/>
<keyword id="KW-0067">ATP-binding</keyword>
<keyword id="KW-0436">Ligase</keyword>
<keyword id="KW-0547">Nucleotide-binding</keyword>
<keyword id="KW-1185">Reference proteome</keyword>
<feature type="chain" id="PRO_0000323508" description="Putative glutamate--cysteine ligase 2-2">
    <location>
        <begin position="1"/>
        <end position="861"/>
    </location>
</feature>
<feature type="region of interest" description="Carboxylate-amine ligase">
    <location>
        <begin position="1"/>
        <end position="372"/>
    </location>
</feature>
<feature type="region of interest" description="Unknown">
    <location>
        <begin position="373"/>
        <end position="861"/>
    </location>
</feature>
<comment type="function">
    <text evidence="1">ATP-dependent carboxylate-amine ligase which exhibits weak glutamate--cysteine ligase activity.</text>
</comment>
<comment type="catalytic activity">
    <reaction>
        <text>L-cysteine + L-glutamate + ATP = gamma-L-glutamyl-L-cysteine + ADP + phosphate + H(+)</text>
        <dbReference type="Rhea" id="RHEA:13285"/>
        <dbReference type="ChEBI" id="CHEBI:15378"/>
        <dbReference type="ChEBI" id="CHEBI:29985"/>
        <dbReference type="ChEBI" id="CHEBI:30616"/>
        <dbReference type="ChEBI" id="CHEBI:35235"/>
        <dbReference type="ChEBI" id="CHEBI:43474"/>
        <dbReference type="ChEBI" id="CHEBI:58173"/>
        <dbReference type="ChEBI" id="CHEBI:456216"/>
        <dbReference type="EC" id="6.3.2.2"/>
    </reaction>
</comment>
<comment type="similarity">
    <text evidence="2">In the N-terminal section; belongs to the glutamate--cysteine ligase type 2 family. YbdK subfamily.</text>
</comment>
<dbReference type="EC" id="6.3.2.2"/>
<dbReference type="EMBL" id="CP000249">
    <property type="protein sequence ID" value="ABD12269.1"/>
    <property type="molecule type" value="Genomic_DNA"/>
</dbReference>
<dbReference type="RefSeq" id="WP_011437298.1">
    <property type="nucleotide sequence ID" value="NZ_JENI01000026.1"/>
</dbReference>
<dbReference type="SMR" id="Q2J8X3"/>
<dbReference type="STRING" id="106370.Francci3_2911"/>
<dbReference type="KEGG" id="fra:Francci3_2911"/>
<dbReference type="eggNOG" id="COG2170">
    <property type="taxonomic scope" value="Bacteria"/>
</dbReference>
<dbReference type="eggNOG" id="COG2308">
    <property type="taxonomic scope" value="Bacteria"/>
</dbReference>
<dbReference type="HOGENOM" id="CLU_017048_0_0_11"/>
<dbReference type="OrthoDB" id="9803842at2"/>
<dbReference type="PhylomeDB" id="Q2J8X3"/>
<dbReference type="Proteomes" id="UP000001937">
    <property type="component" value="Chromosome"/>
</dbReference>
<dbReference type="GO" id="GO:0005524">
    <property type="term" value="F:ATP binding"/>
    <property type="evidence" value="ECO:0007669"/>
    <property type="project" value="UniProtKB-KW"/>
</dbReference>
<dbReference type="GO" id="GO:0004357">
    <property type="term" value="F:glutamate-cysteine ligase activity"/>
    <property type="evidence" value="ECO:0007669"/>
    <property type="project" value="UniProtKB-EC"/>
</dbReference>
<dbReference type="GO" id="GO:0042398">
    <property type="term" value="P:modified amino acid biosynthetic process"/>
    <property type="evidence" value="ECO:0007669"/>
    <property type="project" value="InterPro"/>
</dbReference>
<dbReference type="Gene3D" id="3.30.1490.270">
    <property type="match status" value="1"/>
</dbReference>
<dbReference type="Gene3D" id="3.30.590.20">
    <property type="match status" value="1"/>
</dbReference>
<dbReference type="Gene3D" id="3.40.50.11290">
    <property type="match status" value="1"/>
</dbReference>
<dbReference type="HAMAP" id="MF_01609">
    <property type="entry name" value="Glu_cys_ligase_2"/>
    <property type="match status" value="1"/>
</dbReference>
<dbReference type="InterPro" id="IPR051680">
    <property type="entry name" value="ATP-dep_Glu-Cys_Ligase-2"/>
</dbReference>
<dbReference type="InterPro" id="IPR025841">
    <property type="entry name" value="CP_ATPgrasp_2"/>
</dbReference>
<dbReference type="InterPro" id="IPR006336">
    <property type="entry name" value="GCS2"/>
</dbReference>
<dbReference type="InterPro" id="IPR014746">
    <property type="entry name" value="Gln_synth/guanido_kin_cat_dom"/>
</dbReference>
<dbReference type="InterPro" id="IPR011793">
    <property type="entry name" value="YbdK"/>
</dbReference>
<dbReference type="NCBIfam" id="TIGR02050">
    <property type="entry name" value="gshA_cyan_rel"/>
    <property type="match status" value="1"/>
</dbReference>
<dbReference type="NCBIfam" id="NF010041">
    <property type="entry name" value="PRK13517.1-1"/>
    <property type="match status" value="1"/>
</dbReference>
<dbReference type="PANTHER" id="PTHR34595">
    <property type="entry name" value="BLR5612 PROTEIN"/>
    <property type="match status" value="1"/>
</dbReference>
<dbReference type="PANTHER" id="PTHR34595:SF7">
    <property type="entry name" value="SLL1039 PROTEIN"/>
    <property type="match status" value="1"/>
</dbReference>
<dbReference type="Pfam" id="PF14403">
    <property type="entry name" value="CP_ATPgrasp_2"/>
    <property type="match status" value="1"/>
</dbReference>
<dbReference type="Pfam" id="PF04107">
    <property type="entry name" value="GCS2"/>
    <property type="match status" value="1"/>
</dbReference>
<dbReference type="SUPFAM" id="SSF55931">
    <property type="entry name" value="Glutamine synthetase/guanido kinase"/>
    <property type="match status" value="1"/>
</dbReference>
<dbReference type="SUPFAM" id="SSF56059">
    <property type="entry name" value="Glutathione synthetase ATP-binding domain-like"/>
    <property type="match status" value="1"/>
</dbReference>